<gene>
    <name type="primary">ftsE</name>
    <name type="ordered locus">c4256</name>
</gene>
<accession>P0A9R8</accession>
<accession>P10115</accession>
<protein>
    <recommendedName>
        <fullName>Cell division ATP-binding protein FtsE</fullName>
    </recommendedName>
</protein>
<dbReference type="EMBL" id="AE014075">
    <property type="protein sequence ID" value="AAN82692.1"/>
    <property type="molecule type" value="Genomic_DNA"/>
</dbReference>
<dbReference type="RefSeq" id="WP_000617723.1">
    <property type="nucleotide sequence ID" value="NZ_CP051263.1"/>
</dbReference>
<dbReference type="SMR" id="P0A9R8"/>
<dbReference type="STRING" id="199310.c4256"/>
<dbReference type="GeneID" id="86862141"/>
<dbReference type="KEGG" id="ecc:c4256"/>
<dbReference type="eggNOG" id="COG2884">
    <property type="taxonomic scope" value="Bacteria"/>
</dbReference>
<dbReference type="HOGENOM" id="CLU_000604_1_22_6"/>
<dbReference type="BioCyc" id="ECOL199310:C4256-MONOMER"/>
<dbReference type="Proteomes" id="UP000001410">
    <property type="component" value="Chromosome"/>
</dbReference>
<dbReference type="GO" id="GO:0005886">
    <property type="term" value="C:plasma membrane"/>
    <property type="evidence" value="ECO:0007669"/>
    <property type="project" value="UniProtKB-SubCell"/>
</dbReference>
<dbReference type="GO" id="GO:0005524">
    <property type="term" value="F:ATP binding"/>
    <property type="evidence" value="ECO:0007669"/>
    <property type="project" value="UniProtKB-KW"/>
</dbReference>
<dbReference type="GO" id="GO:0016887">
    <property type="term" value="F:ATP hydrolysis activity"/>
    <property type="evidence" value="ECO:0007669"/>
    <property type="project" value="InterPro"/>
</dbReference>
<dbReference type="GO" id="GO:0022857">
    <property type="term" value="F:transmembrane transporter activity"/>
    <property type="evidence" value="ECO:0007669"/>
    <property type="project" value="TreeGrafter"/>
</dbReference>
<dbReference type="GO" id="GO:0051301">
    <property type="term" value="P:cell division"/>
    <property type="evidence" value="ECO:0007669"/>
    <property type="project" value="UniProtKB-KW"/>
</dbReference>
<dbReference type="FunFam" id="3.40.50.300:FF:000056">
    <property type="entry name" value="Cell division ATP-binding protein FtsE"/>
    <property type="match status" value="1"/>
</dbReference>
<dbReference type="Gene3D" id="3.40.50.300">
    <property type="entry name" value="P-loop containing nucleotide triphosphate hydrolases"/>
    <property type="match status" value="1"/>
</dbReference>
<dbReference type="InterPro" id="IPR003593">
    <property type="entry name" value="AAA+_ATPase"/>
</dbReference>
<dbReference type="InterPro" id="IPR003439">
    <property type="entry name" value="ABC_transporter-like_ATP-bd"/>
</dbReference>
<dbReference type="InterPro" id="IPR017871">
    <property type="entry name" value="ABC_transporter-like_CS"/>
</dbReference>
<dbReference type="InterPro" id="IPR015854">
    <property type="entry name" value="ABC_transpr_LolD-like"/>
</dbReference>
<dbReference type="InterPro" id="IPR005286">
    <property type="entry name" value="Cell_div_FtsE"/>
</dbReference>
<dbReference type="InterPro" id="IPR027417">
    <property type="entry name" value="P-loop_NTPase"/>
</dbReference>
<dbReference type="NCBIfam" id="TIGR02673">
    <property type="entry name" value="FtsE"/>
    <property type="match status" value="1"/>
</dbReference>
<dbReference type="PANTHER" id="PTHR24220:SF470">
    <property type="entry name" value="CELL DIVISION ATP-BINDING PROTEIN FTSE"/>
    <property type="match status" value="1"/>
</dbReference>
<dbReference type="PANTHER" id="PTHR24220">
    <property type="entry name" value="IMPORT ATP-BINDING PROTEIN"/>
    <property type="match status" value="1"/>
</dbReference>
<dbReference type="Pfam" id="PF00005">
    <property type="entry name" value="ABC_tran"/>
    <property type="match status" value="1"/>
</dbReference>
<dbReference type="SMART" id="SM00382">
    <property type="entry name" value="AAA"/>
    <property type="match status" value="1"/>
</dbReference>
<dbReference type="SUPFAM" id="SSF52540">
    <property type="entry name" value="P-loop containing nucleoside triphosphate hydrolases"/>
    <property type="match status" value="1"/>
</dbReference>
<dbReference type="PROSITE" id="PS00211">
    <property type="entry name" value="ABC_TRANSPORTER_1"/>
    <property type="match status" value="1"/>
</dbReference>
<dbReference type="PROSITE" id="PS50893">
    <property type="entry name" value="ABC_TRANSPORTER_2"/>
    <property type="match status" value="1"/>
</dbReference>
<comment type="function">
    <text evidence="1">Part of the ABC transporter FtsEX involved in cellular division. Important for assembly or stability of the septal ring.</text>
</comment>
<comment type="subunit">
    <text evidence="1">Homodimer. Forms a membrane-associated complex with FtsX.</text>
</comment>
<comment type="subcellular location">
    <subcellularLocation>
        <location evidence="1">Cell inner membrane</location>
        <topology evidence="1">Peripheral membrane protein</topology>
        <orientation evidence="1">Cytoplasmic side</orientation>
    </subcellularLocation>
    <text evidence="1">Associated with the membrane through an interaction with FtsX.</text>
</comment>
<comment type="similarity">
    <text evidence="3">Belongs to the ABC transporter superfamily.</text>
</comment>
<proteinExistence type="inferred from homology"/>
<sequence length="222" mass="24439">MIRFEHVSKAYLGGRQALQGVTFHMQPGEMAFLTGHSGAGKSTLLKLICGIERPSAGKIWFSGHDITRLKNREVPFLRRQIGMIFQDHHLLMDRTVYDNVAIPLIIAGASGDDIRRRVSAALDKVGLLDKAKNFPIQLSGGEQQRVGIARAVVNKPAVLLADEPTGNLDDALSEGILRLFEEFNRVGVTVLMATHDINLISRRSYRMLTLSDGHLHGGVGHE</sequence>
<keyword id="KW-0067">ATP-binding</keyword>
<keyword id="KW-0131">Cell cycle</keyword>
<keyword id="KW-0132">Cell division</keyword>
<keyword id="KW-0997">Cell inner membrane</keyword>
<keyword id="KW-1003">Cell membrane</keyword>
<keyword id="KW-0472">Membrane</keyword>
<keyword id="KW-0547">Nucleotide-binding</keyword>
<keyword id="KW-1185">Reference proteome</keyword>
<organism>
    <name type="scientific">Escherichia coli O6:H1 (strain CFT073 / ATCC 700928 / UPEC)</name>
    <dbReference type="NCBI Taxonomy" id="199310"/>
    <lineage>
        <taxon>Bacteria</taxon>
        <taxon>Pseudomonadati</taxon>
        <taxon>Pseudomonadota</taxon>
        <taxon>Gammaproteobacteria</taxon>
        <taxon>Enterobacterales</taxon>
        <taxon>Enterobacteriaceae</taxon>
        <taxon>Escherichia</taxon>
    </lineage>
</organism>
<feature type="chain" id="PRO_0000092330" description="Cell division ATP-binding protein FtsE">
    <location>
        <begin position="1"/>
        <end position="222"/>
    </location>
</feature>
<feature type="domain" description="ABC transporter" evidence="2">
    <location>
        <begin position="2"/>
        <end position="222"/>
    </location>
</feature>
<feature type="binding site" evidence="2">
    <location>
        <begin position="35"/>
        <end position="42"/>
    </location>
    <ligand>
        <name>ATP</name>
        <dbReference type="ChEBI" id="CHEBI:30616"/>
    </ligand>
</feature>
<evidence type="ECO:0000250" key="1">
    <source>
        <dbReference type="UniProtKB" id="P0A9R7"/>
    </source>
</evidence>
<evidence type="ECO:0000255" key="2">
    <source>
        <dbReference type="PROSITE-ProRule" id="PRU00434"/>
    </source>
</evidence>
<evidence type="ECO:0000305" key="3"/>
<reference key="1">
    <citation type="journal article" date="2002" name="Proc. Natl. Acad. Sci. U.S.A.">
        <title>Extensive mosaic structure revealed by the complete genome sequence of uropathogenic Escherichia coli.</title>
        <authorList>
            <person name="Welch R.A."/>
            <person name="Burland V."/>
            <person name="Plunkett G. III"/>
            <person name="Redford P."/>
            <person name="Roesch P."/>
            <person name="Rasko D."/>
            <person name="Buckles E.L."/>
            <person name="Liou S.-R."/>
            <person name="Boutin A."/>
            <person name="Hackett J."/>
            <person name="Stroud D."/>
            <person name="Mayhew G.F."/>
            <person name="Rose D.J."/>
            <person name="Zhou S."/>
            <person name="Schwartz D.C."/>
            <person name="Perna N.T."/>
            <person name="Mobley H.L.T."/>
            <person name="Donnenberg M.S."/>
            <person name="Blattner F.R."/>
        </authorList>
    </citation>
    <scope>NUCLEOTIDE SEQUENCE [LARGE SCALE GENOMIC DNA]</scope>
    <source>
        <strain>CFT073 / ATCC 700928 / UPEC</strain>
    </source>
</reference>
<name>FTSE_ECOL6</name>